<comment type="function">
    <text evidence="1">Involved in mRNA export coupled transcription activation by association with both the AMEX and the SAGA complexes. The SAGA complex is a multiprotein complex that activates transcription by remodeling chromatin and mediating histone acetylation and deubiquitination. Within the SAGA complex, participates in a subcomplex that specifically deubiquitinates histone H2B. The SAGA complex is recruited to specific gene promoters by activators, where it is required for transcription. Required for nuclear receptor-mediated transactivation. Involved in transcription elongation by recruiting the THO complex onto nascent mRNA. The AMEX complex functions in docking export-competent ribonucleoprotein particles (mRNPs) to the nuclear entrance of the nuclear pore complex (nuclear basket). AMEX participates in mRNA export and accurate chromatin positioning in the nucleus by tethering genes to the nuclear periphery (By similarity).</text>
</comment>
<comment type="subunit">
    <text evidence="2">Component of the nuclear pore complex (NPC)-associated AMEX complex (anchoring and mRNA export complex), composed of at least e(y)2 and xmas-2. Component of the SAGA transcription coactivator-HAT complexes, at least composed of Ada2b, e(y)2, Pcaf/Gcn5, Taf10 and Nipped-A/Trrap. Within the SAGA complex, e(y)2, Sgf11, and not/nonstop form an additional subcomplex of SAGA called the DUB module (deubiquitination module). Component of the THO complex, composed of at least e(y)2, HPR1, THO2, THOC5, THOC6 and THOC7. Interacts with e(y)1. Interacts with su(Hw) (via zinc fingers). Interacts with xmas-2; required for localization to the nuclear periphery. Interacts with the nuclear pore complex (NPC).</text>
</comment>
<comment type="subcellular location">
    <subcellularLocation>
        <location evidence="2">Nucleus</location>
        <location evidence="2">Nucleoplasm</location>
    </subcellularLocation>
    <subcellularLocation>
        <location evidence="2">Cytoplasm</location>
    </subcellularLocation>
</comment>
<comment type="similarity">
    <text evidence="2">Belongs to the ENY2 family.</text>
</comment>
<reference key="1">
    <citation type="journal article" date="2007" name="Nature">
        <title>Evolution of genes and genomes on the Drosophila phylogeny.</title>
        <authorList>
            <consortium name="Drosophila 12 genomes consortium"/>
        </authorList>
    </citation>
    <scope>NUCLEOTIDE SEQUENCE [LARGE SCALE GENOMIC DNA]</scope>
    <source>
        <strain>Tai18E2 / Tucson 14021-0261.01</strain>
    </source>
</reference>
<name>ENY2_DROYA</name>
<gene>
    <name evidence="2" type="primary">e(y)2</name>
    <name type="ORF">GE17290</name>
</gene>
<dbReference type="EMBL" id="CM000162">
    <property type="protein sequence ID" value="EDX01955.1"/>
    <property type="molecule type" value="Genomic_DNA"/>
</dbReference>
<dbReference type="SMR" id="B4PY93"/>
<dbReference type="EnsemblMetazoa" id="FBtr0263808">
    <property type="protein sequence ID" value="FBpp0262300"/>
    <property type="gene ID" value="FBgn0234764"/>
</dbReference>
<dbReference type="EnsemblMetazoa" id="XM_002100811.4">
    <property type="protein sequence ID" value="XP_002100847.1"/>
    <property type="gene ID" value="LOC6525008"/>
</dbReference>
<dbReference type="GeneID" id="6525008"/>
<dbReference type="KEGG" id="dya:Dyak_GE17290"/>
<dbReference type="CTD" id="45848"/>
<dbReference type="eggNOG" id="KOG4479">
    <property type="taxonomic scope" value="Eukaryota"/>
</dbReference>
<dbReference type="HOGENOM" id="CLU_134052_1_2_1"/>
<dbReference type="OMA" id="RLMCRNI"/>
<dbReference type="OrthoDB" id="6221744at2759"/>
<dbReference type="PhylomeDB" id="B4PY93"/>
<dbReference type="Proteomes" id="UP000002282">
    <property type="component" value="Chromosome X"/>
</dbReference>
<dbReference type="GO" id="GO:0005737">
    <property type="term" value="C:cytoplasm"/>
    <property type="evidence" value="ECO:0007669"/>
    <property type="project" value="UniProtKB-SubCell"/>
</dbReference>
<dbReference type="GO" id="GO:0071819">
    <property type="term" value="C:DUBm complex"/>
    <property type="evidence" value="ECO:0007669"/>
    <property type="project" value="UniProtKB-UniRule"/>
</dbReference>
<dbReference type="GO" id="GO:0034399">
    <property type="term" value="C:nuclear periphery"/>
    <property type="evidence" value="ECO:0007669"/>
    <property type="project" value="EnsemblMetazoa"/>
</dbReference>
<dbReference type="GO" id="GO:0005643">
    <property type="term" value="C:nuclear pore"/>
    <property type="evidence" value="ECO:0000250"/>
    <property type="project" value="UniProtKB"/>
</dbReference>
<dbReference type="GO" id="GO:0005654">
    <property type="term" value="C:nucleoplasm"/>
    <property type="evidence" value="ECO:0007669"/>
    <property type="project" value="UniProtKB-SubCell"/>
</dbReference>
<dbReference type="GO" id="GO:0000124">
    <property type="term" value="C:SAGA complex"/>
    <property type="evidence" value="ECO:0000250"/>
    <property type="project" value="UniProtKB"/>
</dbReference>
<dbReference type="GO" id="GO:0070390">
    <property type="term" value="C:transcription export complex 2"/>
    <property type="evidence" value="ECO:0007669"/>
    <property type="project" value="UniProtKB-UniRule"/>
</dbReference>
<dbReference type="GO" id="GO:0070742">
    <property type="term" value="F:C2H2 zinc finger domain binding"/>
    <property type="evidence" value="ECO:0007669"/>
    <property type="project" value="EnsemblMetazoa"/>
</dbReference>
<dbReference type="GO" id="GO:0043035">
    <property type="term" value="F:chromatin insulator sequence binding"/>
    <property type="evidence" value="ECO:0000250"/>
    <property type="project" value="UniProtKB"/>
</dbReference>
<dbReference type="GO" id="GO:0001094">
    <property type="term" value="F:TFIID-class transcription factor complex binding"/>
    <property type="evidence" value="ECO:0007669"/>
    <property type="project" value="EnsemblMetazoa"/>
</dbReference>
<dbReference type="GO" id="GO:0003713">
    <property type="term" value="F:transcription coactivator activity"/>
    <property type="evidence" value="ECO:0007669"/>
    <property type="project" value="UniProtKB-UniRule"/>
</dbReference>
<dbReference type="GO" id="GO:0033696">
    <property type="term" value="P:heterochromatin boundary formation"/>
    <property type="evidence" value="ECO:0007669"/>
    <property type="project" value="EnsemblMetazoa"/>
</dbReference>
<dbReference type="GO" id="GO:0006406">
    <property type="term" value="P:mRNA export from nucleus"/>
    <property type="evidence" value="ECO:0000250"/>
    <property type="project" value="UniProtKB"/>
</dbReference>
<dbReference type="GO" id="GO:0016973">
    <property type="term" value="P:poly(A)+ mRNA export from nucleus"/>
    <property type="evidence" value="ECO:0007669"/>
    <property type="project" value="EnsemblMetazoa"/>
</dbReference>
<dbReference type="GO" id="GO:0045944">
    <property type="term" value="P:positive regulation of transcription by RNA polymerase II"/>
    <property type="evidence" value="ECO:0000250"/>
    <property type="project" value="UniProtKB"/>
</dbReference>
<dbReference type="GO" id="GO:0015031">
    <property type="term" value="P:protein transport"/>
    <property type="evidence" value="ECO:0007669"/>
    <property type="project" value="UniProtKB-KW"/>
</dbReference>
<dbReference type="GO" id="GO:0006368">
    <property type="term" value="P:transcription elongation by RNA polymerase II"/>
    <property type="evidence" value="ECO:0007669"/>
    <property type="project" value="UniProtKB-UniRule"/>
</dbReference>
<dbReference type="FunFam" id="1.10.246.140:FF:000002">
    <property type="entry name" value="Enhancer of yellow 2 transcription factor"/>
    <property type="match status" value="1"/>
</dbReference>
<dbReference type="Gene3D" id="1.10.246.140">
    <property type="match status" value="1"/>
</dbReference>
<dbReference type="HAMAP" id="MF_03046">
    <property type="entry name" value="ENY2_Sus1"/>
    <property type="match status" value="1"/>
</dbReference>
<dbReference type="InterPro" id="IPR018783">
    <property type="entry name" value="TF_ENY2"/>
</dbReference>
<dbReference type="InterPro" id="IPR038212">
    <property type="entry name" value="TF_EnY2_sf"/>
</dbReference>
<dbReference type="PANTHER" id="PTHR12514">
    <property type="entry name" value="ENHANCER OF YELLOW 2 TRANSCRIPTION FACTOR"/>
    <property type="match status" value="1"/>
</dbReference>
<dbReference type="Pfam" id="PF10163">
    <property type="entry name" value="EnY2"/>
    <property type="match status" value="1"/>
</dbReference>
<evidence type="ECO:0000250" key="1"/>
<evidence type="ECO:0000255" key="2">
    <source>
        <dbReference type="HAMAP-Rule" id="MF_03046"/>
    </source>
</evidence>
<accession>B4PY93</accession>
<protein>
    <recommendedName>
        <fullName evidence="2">Enhancer of yellow 2 transcription factor</fullName>
    </recommendedName>
</protein>
<proteinExistence type="inferred from homology"/>
<organism>
    <name type="scientific">Drosophila yakuba</name>
    <name type="common">Fruit fly</name>
    <dbReference type="NCBI Taxonomy" id="7245"/>
    <lineage>
        <taxon>Eukaryota</taxon>
        <taxon>Metazoa</taxon>
        <taxon>Ecdysozoa</taxon>
        <taxon>Arthropoda</taxon>
        <taxon>Hexapoda</taxon>
        <taxon>Insecta</taxon>
        <taxon>Pterygota</taxon>
        <taxon>Neoptera</taxon>
        <taxon>Endopterygota</taxon>
        <taxon>Diptera</taxon>
        <taxon>Brachycera</taxon>
        <taxon>Muscomorpha</taxon>
        <taxon>Ephydroidea</taxon>
        <taxon>Drosophilidae</taxon>
        <taxon>Drosophila</taxon>
        <taxon>Sophophora</taxon>
    </lineage>
</organism>
<sequence>MSVSAAVDQYTVLTGDRSKIKDLLCSRLTECGWRDEVRLMCRNILLEKGTNNSFTVEQLITEVTPKARTLVPDAVKKELLMKIRTILTENEEEADEAEEEP</sequence>
<keyword id="KW-0010">Activator</keyword>
<keyword id="KW-0156">Chromatin regulator</keyword>
<keyword id="KW-0963">Cytoplasm</keyword>
<keyword id="KW-0509">mRNA transport</keyword>
<keyword id="KW-0539">Nucleus</keyword>
<keyword id="KW-0653">Protein transport</keyword>
<keyword id="KW-0804">Transcription</keyword>
<keyword id="KW-0805">Transcription regulation</keyword>
<keyword id="KW-0811">Translocation</keyword>
<keyword id="KW-0813">Transport</keyword>
<feature type="chain" id="PRO_0000367563" description="Enhancer of yellow 2 transcription factor">
    <location>
        <begin position="1"/>
        <end position="101"/>
    </location>
</feature>